<proteinExistence type="evidence at protein level"/>
<organism>
    <name type="scientific">Mycobacterium tuberculosis (strain ATCC 25618 / H37Rv)</name>
    <dbReference type="NCBI Taxonomy" id="83332"/>
    <lineage>
        <taxon>Bacteria</taxon>
        <taxon>Bacillati</taxon>
        <taxon>Actinomycetota</taxon>
        <taxon>Actinomycetes</taxon>
        <taxon>Mycobacteriales</taxon>
        <taxon>Mycobacteriaceae</taxon>
        <taxon>Mycobacterium</taxon>
        <taxon>Mycobacterium tuberculosis complex</taxon>
    </lineage>
</organism>
<keyword id="KW-0007">Acetylation</keyword>
<keyword id="KW-1185">Reference proteome</keyword>
<dbReference type="EMBL" id="AL123456">
    <property type="protein sequence ID" value="CCP45365.1"/>
    <property type="molecule type" value="Genomic_DNA"/>
</dbReference>
<dbReference type="PIR" id="H70723">
    <property type="entry name" value="H70723"/>
</dbReference>
<dbReference type="RefSeq" id="NP_217085.1">
    <property type="nucleotide sequence ID" value="NC_000962.3"/>
</dbReference>
<dbReference type="RefSeq" id="WP_003413334.1">
    <property type="nucleotide sequence ID" value="NZ_NVQJ01000023.1"/>
</dbReference>
<dbReference type="SMR" id="P9WL93"/>
<dbReference type="FunCoup" id="P9WL93">
    <property type="interactions" value="1"/>
</dbReference>
<dbReference type="STRING" id="83332.Rv2569c"/>
<dbReference type="iPTMnet" id="P9WL93"/>
<dbReference type="PaxDb" id="83332-Rv2569c"/>
<dbReference type="DNASU" id="887783"/>
<dbReference type="GeneID" id="887783"/>
<dbReference type="KEGG" id="mtu:Rv2569c"/>
<dbReference type="KEGG" id="mtv:RVBD_2569c"/>
<dbReference type="PATRIC" id="fig|83332.111.peg.2871"/>
<dbReference type="TubercuList" id="Rv2569c"/>
<dbReference type="eggNOG" id="COG1305">
    <property type="taxonomic scope" value="Bacteria"/>
</dbReference>
<dbReference type="InParanoid" id="P9WL93"/>
<dbReference type="OrthoDB" id="9804023at2"/>
<dbReference type="PhylomeDB" id="P9WL93"/>
<dbReference type="Proteomes" id="UP000001584">
    <property type="component" value="Chromosome"/>
</dbReference>
<dbReference type="GO" id="GO:0005886">
    <property type="term" value="C:plasma membrane"/>
    <property type="evidence" value="ECO:0007005"/>
    <property type="project" value="MTBBASE"/>
</dbReference>
<dbReference type="FunFam" id="3.10.620.30:FF:000007">
    <property type="entry name" value="Transglutaminase domain-containing protein"/>
    <property type="match status" value="1"/>
</dbReference>
<dbReference type="Gene3D" id="3.10.620.30">
    <property type="match status" value="1"/>
</dbReference>
<dbReference type="InterPro" id="IPR013589">
    <property type="entry name" value="Bac_transglu_N"/>
</dbReference>
<dbReference type="InterPro" id="IPR038765">
    <property type="entry name" value="Papain-like_cys_pep_sf"/>
</dbReference>
<dbReference type="InterPro" id="IPR002931">
    <property type="entry name" value="Transglutaminase-like"/>
</dbReference>
<dbReference type="PANTHER" id="PTHR33490:SF7">
    <property type="entry name" value="BLR2979 PROTEIN"/>
    <property type="match status" value="1"/>
</dbReference>
<dbReference type="PANTHER" id="PTHR33490">
    <property type="entry name" value="BLR5614 PROTEIN-RELATED"/>
    <property type="match status" value="1"/>
</dbReference>
<dbReference type="Pfam" id="PF08379">
    <property type="entry name" value="Bact_transglu_N"/>
    <property type="match status" value="1"/>
</dbReference>
<dbReference type="Pfam" id="PF01841">
    <property type="entry name" value="Transglut_core"/>
    <property type="match status" value="1"/>
</dbReference>
<dbReference type="SMART" id="SM00460">
    <property type="entry name" value="TGc"/>
    <property type="match status" value="1"/>
</dbReference>
<dbReference type="SUPFAM" id="SSF54001">
    <property type="entry name" value="Cysteine proteinases"/>
    <property type="match status" value="1"/>
</dbReference>
<protein>
    <recommendedName>
        <fullName>Uncharacterized protein Rv2569c</fullName>
    </recommendedName>
</protein>
<gene>
    <name type="ordered locus">Rv2569c</name>
    <name type="ORF">MTCY227.32</name>
</gene>
<comment type="similarity">
    <text evidence="1">To M.leprae ML0607.</text>
</comment>
<evidence type="ECO:0000305" key="1"/>
<evidence type="ECO:0007744" key="2">
    <source>
    </source>
</evidence>
<feature type="initiator methionine" description="Removed" evidence="2">
    <location>
        <position position="1"/>
    </location>
</feature>
<feature type="chain" id="PRO_0000104047" description="Uncharacterized protein Rv2569c">
    <location>
        <begin position="2"/>
        <end position="314"/>
    </location>
</feature>
<feature type="modified residue" description="N-acetylserine" evidence="2">
    <location>
        <position position="2"/>
    </location>
</feature>
<accession>P9WL93</accession>
<accession>L0TA23</accession>
<accession>P0A5G5</accession>
<accession>Q50652</accession>
<name>Y2569_MYCTU</name>
<reference key="1">
    <citation type="journal article" date="1998" name="Nature">
        <title>Deciphering the biology of Mycobacterium tuberculosis from the complete genome sequence.</title>
        <authorList>
            <person name="Cole S.T."/>
            <person name="Brosch R."/>
            <person name="Parkhill J."/>
            <person name="Garnier T."/>
            <person name="Churcher C.M."/>
            <person name="Harris D.E."/>
            <person name="Gordon S.V."/>
            <person name="Eiglmeier K."/>
            <person name="Gas S."/>
            <person name="Barry C.E. III"/>
            <person name="Tekaia F."/>
            <person name="Badcock K."/>
            <person name="Basham D."/>
            <person name="Brown D."/>
            <person name="Chillingworth T."/>
            <person name="Connor R."/>
            <person name="Davies R.M."/>
            <person name="Devlin K."/>
            <person name="Feltwell T."/>
            <person name="Gentles S."/>
            <person name="Hamlin N."/>
            <person name="Holroyd S."/>
            <person name="Hornsby T."/>
            <person name="Jagels K."/>
            <person name="Krogh A."/>
            <person name="McLean J."/>
            <person name="Moule S."/>
            <person name="Murphy L.D."/>
            <person name="Oliver S."/>
            <person name="Osborne J."/>
            <person name="Quail M.A."/>
            <person name="Rajandream M.A."/>
            <person name="Rogers J."/>
            <person name="Rutter S."/>
            <person name="Seeger K."/>
            <person name="Skelton S."/>
            <person name="Squares S."/>
            <person name="Squares R."/>
            <person name="Sulston J.E."/>
            <person name="Taylor K."/>
            <person name="Whitehead S."/>
            <person name="Barrell B.G."/>
        </authorList>
    </citation>
    <scope>NUCLEOTIDE SEQUENCE [LARGE SCALE GENOMIC DNA]</scope>
    <source>
        <strain>ATCC 25618 / H37Rv</strain>
    </source>
</reference>
<reference key="2">
    <citation type="journal article" date="2011" name="Mol. Cell. Proteomics">
        <title>Proteogenomic analysis of Mycobacterium tuberculosis by high resolution mass spectrometry.</title>
        <authorList>
            <person name="Kelkar D.S."/>
            <person name="Kumar D."/>
            <person name="Kumar P."/>
            <person name="Balakrishnan L."/>
            <person name="Muthusamy B."/>
            <person name="Yadav A.K."/>
            <person name="Shrivastava P."/>
            <person name="Marimuthu A."/>
            <person name="Anand S."/>
            <person name="Sundaram H."/>
            <person name="Kingsbury R."/>
            <person name="Harsha H.C."/>
            <person name="Nair B."/>
            <person name="Prasad T.S."/>
            <person name="Chauhan D.S."/>
            <person name="Katoch K."/>
            <person name="Katoch V.M."/>
            <person name="Kumar P."/>
            <person name="Chaerkady R."/>
            <person name="Ramachandran S."/>
            <person name="Dash D."/>
            <person name="Pandey A."/>
        </authorList>
    </citation>
    <scope>ACETYLATION [LARGE SCALE ANALYSIS] AT SER-2</scope>
    <scope>CLEAVAGE OF INITIATOR METHIONINE [LARGE SCALE ANALYSIS]</scope>
    <scope>IDENTIFICATION BY MASS SPECTROMETRY [LARGE SCALE ANALYSIS]</scope>
    <source>
        <strain>ATCC 25618 / H37Rv</strain>
    </source>
</reference>
<sequence length="314" mass="34397">MSADSSLSLPLSGTHRYRVTHRTEYRYSDVVTSSYGRGFLTPRNSLRQRCVAHRLTIDPAPADRSTSRDGYGNISSYFHVTEPHRTLTITSDSIVDVSPPPPGLYTSGPALQPWEAARPAGLPGSLATEFTLDLNPPEITDAVREYAAPSFLPKRPLVEVLRDLASRIYTDFTYRSGSTTISTGVNEVLLAREGVCQDFARLAIACLRANGLAACYVSGYLATDPPPGKDRMIGIDATHAWASVWTPQQPGRFEWLGLDPTNDQLVDQRYIVVGRGRDYADVPPLRGIIYTNSENSVIDVSVDVVPFEGDALHA</sequence>